<sequence length="260" mass="27770">MISSLWIAKTGLDAQQTNMDVIANNLANVSTNGFKRQRAVFEDLLYQTIRQPGAQSSEQTTLPSGLQIGTGVRPVATERLHSQGNLSQTNNSKDVAIKGQGFFQVMLPDGTSAYTRDGSFQVDQNGQLVTAGGFQVQPAITIPANALSITIGRDGVVSVTQQGQAAPVQVGQLNLTTFMNDTGLESIGENLYIETQSSGAPNESTPGLNGAGLLYQGYVETSNVNVAEELVNMIQVQRAYEINSKAVSTTDQMLQKLTQL</sequence>
<organism>
    <name type="scientific">Salmonella typhimurium (strain LT2 / SGSC1412 / ATCC 700720)</name>
    <dbReference type="NCBI Taxonomy" id="99287"/>
    <lineage>
        <taxon>Bacteria</taxon>
        <taxon>Pseudomonadati</taxon>
        <taxon>Pseudomonadota</taxon>
        <taxon>Gammaproteobacteria</taxon>
        <taxon>Enterobacterales</taxon>
        <taxon>Enterobacteriaceae</taxon>
        <taxon>Salmonella</taxon>
    </lineage>
</organism>
<gene>
    <name type="primary">flgG</name>
    <name type="synonym">fla FVII</name>
    <name type="synonym">flaL</name>
    <name type="ordered locus">STM1179</name>
</gene>
<feature type="chain" id="PRO_0000180853" description="Flagellar basal-body rod protein FlgG">
    <location>
        <begin position="1"/>
        <end position="260"/>
    </location>
</feature>
<feature type="helix" evidence="3">
    <location>
        <begin position="3"/>
        <end position="27"/>
    </location>
</feature>
<feature type="turn" evidence="3">
    <location>
        <begin position="28"/>
        <end position="30"/>
    </location>
</feature>
<feature type="strand" evidence="3">
    <location>
        <begin position="37"/>
        <end position="41"/>
    </location>
</feature>
<feature type="strand" evidence="3">
    <location>
        <begin position="48"/>
        <end position="50"/>
    </location>
</feature>
<feature type="strand" evidence="3">
    <location>
        <begin position="56"/>
        <end position="59"/>
    </location>
</feature>
<feature type="strand" evidence="3">
    <location>
        <begin position="74"/>
        <end position="79"/>
    </location>
</feature>
<feature type="strand" evidence="2">
    <location>
        <begin position="86"/>
        <end position="88"/>
    </location>
</feature>
<feature type="strand" evidence="2">
    <location>
        <begin position="94"/>
        <end position="100"/>
    </location>
</feature>
<feature type="strand" evidence="2">
    <location>
        <begin position="102"/>
        <end position="106"/>
    </location>
</feature>
<feature type="strand" evidence="2">
    <location>
        <begin position="112"/>
        <end position="116"/>
    </location>
</feature>
<feature type="strand" evidence="2">
    <location>
        <begin position="126"/>
        <end position="129"/>
    </location>
</feature>
<feature type="strand" evidence="3">
    <location>
        <begin position="131"/>
        <end position="133"/>
    </location>
</feature>
<feature type="strand" evidence="2">
    <location>
        <begin position="135"/>
        <end position="138"/>
    </location>
</feature>
<feature type="strand" evidence="2">
    <location>
        <begin position="146"/>
        <end position="151"/>
    </location>
</feature>
<feature type="strand" evidence="2">
    <location>
        <begin position="156"/>
        <end position="161"/>
    </location>
</feature>
<feature type="strand" evidence="2">
    <location>
        <begin position="168"/>
        <end position="172"/>
    </location>
</feature>
<feature type="strand" evidence="2">
    <location>
        <begin position="175"/>
        <end position="177"/>
    </location>
</feature>
<feature type="helix" evidence="2">
    <location>
        <begin position="181"/>
        <end position="183"/>
    </location>
</feature>
<feature type="strand" evidence="2">
    <location>
        <begin position="185"/>
        <end position="188"/>
    </location>
</feature>
<feature type="strand" evidence="2">
    <location>
        <begin position="191"/>
        <end position="193"/>
    </location>
</feature>
<feature type="turn" evidence="2">
    <location>
        <begin position="196"/>
        <end position="198"/>
    </location>
</feature>
<feature type="strand" evidence="2">
    <location>
        <begin position="202"/>
        <end position="204"/>
    </location>
</feature>
<feature type="helix" evidence="3">
    <location>
        <begin position="208"/>
        <end position="210"/>
    </location>
</feature>
<feature type="strand" evidence="2">
    <location>
        <begin position="213"/>
        <end position="216"/>
    </location>
</feature>
<feature type="strand" evidence="2">
    <location>
        <begin position="218"/>
        <end position="220"/>
    </location>
</feature>
<feature type="helix" evidence="3">
    <location>
        <begin position="226"/>
        <end position="259"/>
    </location>
</feature>
<keyword id="KW-0002">3D-structure</keyword>
<keyword id="KW-0975">Bacterial flagellum</keyword>
<keyword id="KW-0903">Direct protein sequencing</keyword>
<keyword id="KW-1185">Reference proteome</keyword>
<comment type="subunit">
    <text>The basal body constitutes a major portion of the flagellar organelle and consists of four rings (L,P,S, and M) mounted on a central rod. The rod consists of about 26 subunits of FlgG in the distal portion, and FlgB, FlgC and FlgF are thought to build up the proximal portion of the rod with about 6 subunits each.</text>
</comment>
<comment type="subcellular location">
    <subcellularLocation>
        <location>Bacterial flagellum basal body</location>
    </subcellularLocation>
</comment>
<comment type="similarity">
    <text evidence="1">Belongs to the flagella basal body rod proteins family.</text>
</comment>
<proteinExistence type="evidence at protein level"/>
<protein>
    <recommendedName>
        <fullName>Flagellar basal-body rod protein FlgG</fullName>
    </recommendedName>
    <alternativeName>
        <fullName>Distal rod protein</fullName>
    </alternativeName>
</protein>
<accession>P0A1J3</accession>
<accession>P16439</accession>
<dbReference type="EMBL" id="X52094">
    <property type="protein sequence ID" value="CAA36314.1"/>
    <property type="molecule type" value="Genomic_DNA"/>
</dbReference>
<dbReference type="EMBL" id="AE006468">
    <property type="protein sequence ID" value="AAL20109.1"/>
    <property type="molecule type" value="Genomic_DNA"/>
</dbReference>
<dbReference type="PIR" id="S08174">
    <property type="entry name" value="XMEBFG"/>
</dbReference>
<dbReference type="RefSeq" id="NP_460150.1">
    <property type="nucleotide sequence ID" value="NC_003197.2"/>
</dbReference>
<dbReference type="RefSeq" id="WP_000625851.1">
    <property type="nucleotide sequence ID" value="NC_003197.2"/>
</dbReference>
<dbReference type="PDB" id="5WRH">
    <property type="method" value="EM"/>
    <property type="resolution" value="7.40 A"/>
    <property type="chains" value="A=1-260"/>
</dbReference>
<dbReference type="PDB" id="6JF2">
    <property type="method" value="X-ray"/>
    <property type="resolution" value="2.00 A"/>
    <property type="chains" value="A/B=47-227"/>
</dbReference>
<dbReference type="PDB" id="6JZR">
    <property type="method" value="EM"/>
    <property type="resolution" value="7.40 A"/>
    <property type="chains" value="A/B/C/D/E/F/G/H/I/J/K/a/b/c/d/e/f/g/h/i/j/k=1-260"/>
</dbReference>
<dbReference type="PDB" id="7BIN">
    <property type="method" value="EM"/>
    <property type="resolution" value="3.20 A"/>
    <property type="chains" value="1/2/3/4/g/h/i/j/k/l/m/n/o/p/q/r/s/t/u/v/w/x/y/z=1-260"/>
</dbReference>
<dbReference type="PDB" id="7CBM">
    <property type="method" value="EM"/>
    <property type="resolution" value="3.20 A"/>
    <property type="chains" value="A/B/C/D/E/F/G/H/I/J/K/L/M/N/O/P/Q/R/S/T/U/V/W/X=1-260"/>
</dbReference>
<dbReference type="PDB" id="7CGO">
    <property type="method" value="EM"/>
    <property type="resolution" value="3.90 A"/>
    <property type="chains" value="A/B/C/D/E/F/G/H/I/J/K/L/M/N/O/P/Q/R/S/T/U/V/W/X=1-260"/>
</dbReference>
<dbReference type="PDB" id="7E80">
    <property type="method" value="EM"/>
    <property type="resolution" value="3.67 A"/>
    <property type="chains" value="A/B/C/D/E/F/G/H/I/J/K/L/M/N/O/P/Q/R/S/T/U/V/W/X=1-260"/>
</dbReference>
<dbReference type="PDB" id="7E82">
    <property type="method" value="EM"/>
    <property type="resolution" value="3.30 A"/>
    <property type="chains" value="A/B/C/D/E/F/G/H/I/J/K/L/M/N/O/P/Q/R/S/T/U/V/W/X=1-260"/>
</dbReference>
<dbReference type="PDB" id="8WKI">
    <property type="method" value="EM"/>
    <property type="resolution" value="3.30 A"/>
    <property type="chains" value="0/1/2/3/4/5/6/7/8/9/ZA/ZB/ZC/ZD/ZE/r/s/t/u/v/w/x/y/z=1-260"/>
</dbReference>
<dbReference type="PDB" id="8WKK">
    <property type="method" value="EM"/>
    <property type="resolution" value="3.30 A"/>
    <property type="chains" value="0/1/2/3/4/5/6/7/8/9/ZA/ZB/ZC/ZD/ZE/r/s/t/u/v/w/x/y/z=1-260"/>
</dbReference>
<dbReference type="PDB" id="8WL2">
    <property type="method" value="EM"/>
    <property type="resolution" value="3.40 A"/>
    <property type="chains" value="0/1/2/3/4/5/6/7/8/9/AF/AG/AH/AI/AJ/AK/AL/AM/AN/ZA/ZB/ZC/ZD/ZE=1-260"/>
</dbReference>
<dbReference type="PDB" id="8WLP">
    <property type="method" value="EM"/>
    <property type="resolution" value="3.80 A"/>
    <property type="chains" value="0/1/2/3/4/5/6/7/8/9/ZA/ZB/ZC/ZD/ZE/r/s/t/u/v/w/x/y/z=1-260"/>
</dbReference>
<dbReference type="PDB" id="8WLQ">
    <property type="method" value="EM"/>
    <property type="resolution" value="3.80 A"/>
    <property type="chains" value="0/1/2/3/4/5/6/7/8/9/ZA/ZB/ZC/ZD/ZE/r/s/t/u/v/w/x/y/z=1-260"/>
</dbReference>
<dbReference type="PDB" id="8WLT">
    <property type="method" value="EM"/>
    <property type="resolution" value="4.10 A"/>
    <property type="chains" value="0/1/2/3/4/5/6/7/8/9/AF/AG/AH/AI/AJ/AK/AL/AM/AN/ZA/ZB/ZC/ZD/ZE=1-260"/>
</dbReference>
<dbReference type="PDB" id="8WO5">
    <property type="method" value="EM"/>
    <property type="resolution" value="7.40 A"/>
    <property type="chains" value="0/1/2/3/4/5/6/7/8/9/AF/AG/AH/AI/AJ/AK/AL/AM/AN/ZA/ZB/ZC/ZD/ZE=1-260"/>
</dbReference>
<dbReference type="PDB" id="8WOE">
    <property type="method" value="EM"/>
    <property type="resolution" value="4.30 A"/>
    <property type="chains" value="0/1/2/3/4/5/6/7/8/9/AF/AG/AH/AI/AJ/AK/AL/AM/AN/ZA/ZB/ZC/ZD/ZE=1-260"/>
</dbReference>
<dbReference type="PDBsum" id="5WRH"/>
<dbReference type="PDBsum" id="6JF2"/>
<dbReference type="PDBsum" id="6JZR"/>
<dbReference type="PDBsum" id="7BIN"/>
<dbReference type="PDBsum" id="7CBM"/>
<dbReference type="PDBsum" id="7CGO"/>
<dbReference type="PDBsum" id="7E80"/>
<dbReference type="PDBsum" id="7E82"/>
<dbReference type="PDBsum" id="8WKI"/>
<dbReference type="PDBsum" id="8WKK"/>
<dbReference type="PDBsum" id="8WL2"/>
<dbReference type="PDBsum" id="8WLP"/>
<dbReference type="PDBsum" id="8WLQ"/>
<dbReference type="PDBsum" id="8WLT"/>
<dbReference type="PDBsum" id="8WO5"/>
<dbReference type="PDBsum" id="8WOE"/>
<dbReference type="EMDB" id="EMD-12192"/>
<dbReference type="EMDB" id="EMD-30336"/>
<dbReference type="EMDB" id="EMD-30359"/>
<dbReference type="EMDB" id="EMD-31006"/>
<dbReference type="EMDB" id="EMD-31008"/>
<dbReference type="EMDB" id="EMD-37600"/>
<dbReference type="EMDB" id="EMD-37601"/>
<dbReference type="EMDB" id="EMD-37611"/>
<dbReference type="EMDB" id="EMD-37627"/>
<dbReference type="EMDB" id="EMD-37628"/>
<dbReference type="EMDB" id="EMD-37630"/>
<dbReference type="EMDB" id="EMD-37679"/>
<dbReference type="EMDB" id="EMD-37684"/>
<dbReference type="EMDB" id="EMD-6683"/>
<dbReference type="SMR" id="P0A1J3"/>
<dbReference type="STRING" id="99287.STM1179"/>
<dbReference type="PaxDb" id="99287-STM1179"/>
<dbReference type="GeneID" id="1252697"/>
<dbReference type="GeneID" id="66755582"/>
<dbReference type="KEGG" id="stm:STM1179"/>
<dbReference type="PATRIC" id="fig|99287.12.peg.1247"/>
<dbReference type="HOGENOM" id="CLU_013687_0_1_6"/>
<dbReference type="OMA" id="MIRSLWT"/>
<dbReference type="PhylomeDB" id="P0A1J3"/>
<dbReference type="BioCyc" id="SENT99287:STM1179-MONOMER"/>
<dbReference type="Proteomes" id="UP000001014">
    <property type="component" value="Chromosome"/>
</dbReference>
<dbReference type="GO" id="GO:0009288">
    <property type="term" value="C:bacterial-type flagellum"/>
    <property type="evidence" value="ECO:0000318"/>
    <property type="project" value="GO_Central"/>
</dbReference>
<dbReference type="GO" id="GO:0009426">
    <property type="term" value="C:bacterial-type flagellum basal body, distal rod"/>
    <property type="evidence" value="ECO:0007669"/>
    <property type="project" value="InterPro"/>
</dbReference>
<dbReference type="GO" id="GO:0071978">
    <property type="term" value="P:bacterial-type flagellum-dependent swarming motility"/>
    <property type="evidence" value="ECO:0000318"/>
    <property type="project" value="GO_Central"/>
</dbReference>
<dbReference type="InterPro" id="IPR001444">
    <property type="entry name" value="Flag_bb_rod_N"/>
</dbReference>
<dbReference type="InterPro" id="IPR019776">
    <property type="entry name" value="Flagellar_basal_body_rod_CS"/>
</dbReference>
<dbReference type="InterPro" id="IPR020013">
    <property type="entry name" value="Flagellar_FlgE/F/G"/>
</dbReference>
<dbReference type="InterPro" id="IPR010930">
    <property type="entry name" value="Flg_bb/hook_C_dom"/>
</dbReference>
<dbReference type="InterPro" id="IPR037925">
    <property type="entry name" value="FlgE/F/G-like"/>
</dbReference>
<dbReference type="InterPro" id="IPR012834">
    <property type="entry name" value="FlgG_G_neg"/>
</dbReference>
<dbReference type="InterPro" id="IPR053967">
    <property type="entry name" value="LlgE_F_G-like_D1"/>
</dbReference>
<dbReference type="NCBIfam" id="TIGR03506">
    <property type="entry name" value="FlgEFG_subfam"/>
    <property type="match status" value="2"/>
</dbReference>
<dbReference type="NCBIfam" id="TIGR02488">
    <property type="entry name" value="flgG_G_neg"/>
    <property type="match status" value="1"/>
</dbReference>
<dbReference type="PANTHER" id="PTHR30435:SF19">
    <property type="entry name" value="FLAGELLAR BASAL-BODY ROD PROTEIN FLGG"/>
    <property type="match status" value="1"/>
</dbReference>
<dbReference type="PANTHER" id="PTHR30435">
    <property type="entry name" value="FLAGELLAR PROTEIN"/>
    <property type="match status" value="1"/>
</dbReference>
<dbReference type="Pfam" id="PF00460">
    <property type="entry name" value="Flg_bb_rod"/>
    <property type="match status" value="1"/>
</dbReference>
<dbReference type="Pfam" id="PF06429">
    <property type="entry name" value="Flg_bbr_C"/>
    <property type="match status" value="1"/>
</dbReference>
<dbReference type="Pfam" id="PF22692">
    <property type="entry name" value="LlgE_F_G_D1"/>
    <property type="match status" value="1"/>
</dbReference>
<dbReference type="SUPFAM" id="SSF117143">
    <property type="entry name" value="Flagellar hook protein flgE"/>
    <property type="match status" value="1"/>
</dbReference>
<dbReference type="PROSITE" id="PS00588">
    <property type="entry name" value="FLAGELLA_BB_ROD"/>
    <property type="match status" value="1"/>
</dbReference>
<evidence type="ECO:0000305" key="1"/>
<evidence type="ECO:0007829" key="2">
    <source>
        <dbReference type="PDB" id="6JF2"/>
    </source>
</evidence>
<evidence type="ECO:0007829" key="3">
    <source>
        <dbReference type="PDB" id="7BIN"/>
    </source>
</evidence>
<reference key="1">
    <citation type="journal article" date="1990" name="J. Mol. Biol.">
        <title>FlgB, FlgC, FlgF and FlgG. A family of structurally related proteins in the flagellar basal body of Salmonella typhimurium.</title>
        <authorList>
            <person name="Homma M."/>
            <person name="Kutsukake K."/>
            <person name="Hasebe M."/>
            <person name="Iino T."/>
            <person name="Macnab R.M."/>
        </authorList>
    </citation>
    <scope>NUCLEOTIDE SEQUENCE [GENOMIC DNA]</scope>
</reference>
<reference key="2">
    <citation type="journal article" date="2001" name="Nature">
        <title>Complete genome sequence of Salmonella enterica serovar Typhimurium LT2.</title>
        <authorList>
            <person name="McClelland M."/>
            <person name="Sanderson K.E."/>
            <person name="Spieth J."/>
            <person name="Clifton S.W."/>
            <person name="Latreille P."/>
            <person name="Courtney L."/>
            <person name="Porwollik S."/>
            <person name="Ali J."/>
            <person name="Dante M."/>
            <person name="Du F."/>
            <person name="Hou S."/>
            <person name="Layman D."/>
            <person name="Leonard S."/>
            <person name="Nguyen C."/>
            <person name="Scott K."/>
            <person name="Holmes A."/>
            <person name="Grewal N."/>
            <person name="Mulvaney E."/>
            <person name="Ryan E."/>
            <person name="Sun H."/>
            <person name="Florea L."/>
            <person name="Miller W."/>
            <person name="Stoneking T."/>
            <person name="Nhan M."/>
            <person name="Waterston R."/>
            <person name="Wilson R.K."/>
        </authorList>
    </citation>
    <scope>NUCLEOTIDE SEQUENCE [LARGE SCALE GENOMIC DNA]</scope>
    <source>
        <strain>LT2 / SGSC1412 / ATCC 700720</strain>
    </source>
</reference>
<reference key="3">
    <citation type="journal article" date="1990" name="J. Mol. Biol.">
        <title>Stoichiometric analysis of the flagellar hook-(basal-body) complex of Salmonella typhimurium.</title>
        <authorList>
            <person name="Jones C.J."/>
            <person name="Macnab R.M."/>
            <person name="Okino H."/>
            <person name="Aizawa S."/>
        </authorList>
    </citation>
    <scope>PROTEIN SEQUENCE OF 1-5</scope>
</reference>
<name>FLGG_SALTY</name>